<sequence>MKLLIKNGHVLDVKTGLDRVTDILAVDGIIHEVGSKIDEAGCEVIDATGLYVTPGLVDAHCHLRDPGYEYKEDIESGTRSAAKGGFTSVACMPNTNPVLDNEAMVKYVINKAKTDGFLNVFPIGALSKGLKGEELSEIGELKFAGAVALSDDGRPVGNSSLMKKAMQYASMFDITIISHCEDLDLVDEGLMNEGYQSSILGLKGNPAPAEEVMIARDLILAEYTKATIHIAHVSTELGVDLIRNAKRRGVKVTAETCPHYFTLTDNACEGFNTNAKVNPPLRTQKDVDAIIQGLKDGTIDIISTDHAPHHIDEKNVEFKIAANGMVGFETAFPLAVTYLVKPGHLSLKELVYKMSFNPSQMLGLNKGTIEVGKLADLIIFDLNEEYKVNITEFESKSKNSPFNGLLLYGQPQYTIVGGTPVVRKKVLL</sequence>
<name>PYRC_RUMCH</name>
<evidence type="ECO:0000255" key="1">
    <source>
        <dbReference type="HAMAP-Rule" id="MF_00220"/>
    </source>
</evidence>
<accession>B8I770</accession>
<keyword id="KW-0378">Hydrolase</keyword>
<keyword id="KW-0479">Metal-binding</keyword>
<keyword id="KW-0665">Pyrimidine biosynthesis</keyword>
<keyword id="KW-1185">Reference proteome</keyword>
<keyword id="KW-0862">Zinc</keyword>
<organism>
    <name type="scientific">Ruminiclostridium cellulolyticum (strain ATCC 35319 / DSM 5812 / JCM 6584 / H10)</name>
    <name type="common">Clostridium cellulolyticum</name>
    <dbReference type="NCBI Taxonomy" id="394503"/>
    <lineage>
        <taxon>Bacteria</taxon>
        <taxon>Bacillati</taxon>
        <taxon>Bacillota</taxon>
        <taxon>Clostridia</taxon>
        <taxon>Eubacteriales</taxon>
        <taxon>Oscillospiraceae</taxon>
        <taxon>Ruminiclostridium</taxon>
    </lineage>
</organism>
<gene>
    <name evidence="1" type="primary">pyrC</name>
    <name type="ordered locus">Ccel_0613</name>
</gene>
<proteinExistence type="inferred from homology"/>
<comment type="function">
    <text evidence="1">Catalyzes the reversible cyclization of carbamoyl aspartate to dihydroorotate.</text>
</comment>
<comment type="catalytic activity">
    <reaction evidence="1">
        <text>(S)-dihydroorotate + H2O = N-carbamoyl-L-aspartate + H(+)</text>
        <dbReference type="Rhea" id="RHEA:24296"/>
        <dbReference type="ChEBI" id="CHEBI:15377"/>
        <dbReference type="ChEBI" id="CHEBI:15378"/>
        <dbReference type="ChEBI" id="CHEBI:30864"/>
        <dbReference type="ChEBI" id="CHEBI:32814"/>
        <dbReference type="EC" id="3.5.2.3"/>
    </reaction>
</comment>
<comment type="cofactor">
    <cofactor evidence="1">
        <name>Zn(2+)</name>
        <dbReference type="ChEBI" id="CHEBI:29105"/>
    </cofactor>
    <text evidence="1">Binds 2 Zn(2+) ions per subunit.</text>
</comment>
<comment type="pathway">
    <text evidence="1">Pyrimidine metabolism; UMP biosynthesis via de novo pathway; (S)-dihydroorotate from bicarbonate: step 3/3.</text>
</comment>
<comment type="similarity">
    <text evidence="1">Belongs to the metallo-dependent hydrolases superfamily. DHOase family. Class I DHOase subfamily.</text>
</comment>
<reference key="1">
    <citation type="submission" date="2009-01" db="EMBL/GenBank/DDBJ databases">
        <title>Complete sequence of Clostridium cellulolyticum H10.</title>
        <authorList>
            <consortium name="US DOE Joint Genome Institute"/>
            <person name="Lucas S."/>
            <person name="Copeland A."/>
            <person name="Lapidus A."/>
            <person name="Glavina del Rio T."/>
            <person name="Dalin E."/>
            <person name="Tice H."/>
            <person name="Bruce D."/>
            <person name="Goodwin L."/>
            <person name="Pitluck S."/>
            <person name="Chertkov O."/>
            <person name="Saunders E."/>
            <person name="Brettin T."/>
            <person name="Detter J.C."/>
            <person name="Han C."/>
            <person name="Larimer F."/>
            <person name="Land M."/>
            <person name="Hauser L."/>
            <person name="Kyrpides N."/>
            <person name="Ivanova N."/>
            <person name="Zhou J."/>
            <person name="Richardson P."/>
        </authorList>
    </citation>
    <scope>NUCLEOTIDE SEQUENCE [LARGE SCALE GENOMIC DNA]</scope>
    <source>
        <strain>ATCC 35319 / DSM 5812 / JCM 6584 / H10</strain>
    </source>
</reference>
<protein>
    <recommendedName>
        <fullName evidence="1">Dihydroorotase</fullName>
        <shortName evidence="1">DHOase</shortName>
        <ecNumber evidence="1">3.5.2.3</ecNumber>
    </recommendedName>
</protein>
<feature type="chain" id="PRO_1000193097" description="Dihydroorotase">
    <location>
        <begin position="1"/>
        <end position="428"/>
    </location>
</feature>
<feature type="active site" evidence="1">
    <location>
        <position position="305"/>
    </location>
</feature>
<feature type="binding site" evidence="1">
    <location>
        <position position="60"/>
    </location>
    <ligand>
        <name>Zn(2+)</name>
        <dbReference type="ChEBI" id="CHEBI:29105"/>
        <label>1</label>
    </ligand>
</feature>
<feature type="binding site" evidence="1">
    <location>
        <begin position="62"/>
        <end position="64"/>
    </location>
    <ligand>
        <name>substrate</name>
    </ligand>
</feature>
<feature type="binding site" evidence="1">
    <location>
        <position position="62"/>
    </location>
    <ligand>
        <name>Zn(2+)</name>
        <dbReference type="ChEBI" id="CHEBI:29105"/>
        <label>1</label>
    </ligand>
</feature>
<feature type="binding site" evidence="1">
    <location>
        <position position="94"/>
    </location>
    <ligand>
        <name>substrate</name>
    </ligand>
</feature>
<feature type="binding site" evidence="1">
    <location>
        <position position="152"/>
    </location>
    <ligand>
        <name>Zn(2+)</name>
        <dbReference type="ChEBI" id="CHEBI:29105"/>
        <label>1</label>
    </ligand>
</feature>
<feature type="binding site" evidence="1">
    <location>
        <position position="152"/>
    </location>
    <ligand>
        <name>Zn(2+)</name>
        <dbReference type="ChEBI" id="CHEBI:29105"/>
        <label>2</label>
    </ligand>
</feature>
<feature type="binding site" evidence="1">
    <location>
        <position position="179"/>
    </location>
    <ligand>
        <name>Zn(2+)</name>
        <dbReference type="ChEBI" id="CHEBI:29105"/>
        <label>2</label>
    </ligand>
</feature>
<feature type="binding site" evidence="1">
    <location>
        <position position="232"/>
    </location>
    <ligand>
        <name>Zn(2+)</name>
        <dbReference type="ChEBI" id="CHEBI:29105"/>
        <label>2</label>
    </ligand>
</feature>
<feature type="binding site" evidence="1">
    <location>
        <position position="278"/>
    </location>
    <ligand>
        <name>substrate</name>
    </ligand>
</feature>
<feature type="binding site" evidence="1">
    <location>
        <position position="305"/>
    </location>
    <ligand>
        <name>Zn(2+)</name>
        <dbReference type="ChEBI" id="CHEBI:29105"/>
        <label>1</label>
    </ligand>
</feature>
<feature type="binding site" evidence="1">
    <location>
        <position position="309"/>
    </location>
    <ligand>
        <name>substrate</name>
    </ligand>
</feature>
<dbReference type="EC" id="3.5.2.3" evidence="1"/>
<dbReference type="EMBL" id="CP001348">
    <property type="protein sequence ID" value="ACL74994.1"/>
    <property type="molecule type" value="Genomic_DNA"/>
</dbReference>
<dbReference type="RefSeq" id="WP_015924163.1">
    <property type="nucleotide sequence ID" value="NC_011898.1"/>
</dbReference>
<dbReference type="SMR" id="B8I770"/>
<dbReference type="STRING" id="394503.Ccel_0613"/>
<dbReference type="KEGG" id="cce:Ccel_0613"/>
<dbReference type="eggNOG" id="COG0044">
    <property type="taxonomic scope" value="Bacteria"/>
</dbReference>
<dbReference type="HOGENOM" id="CLU_015572_1_0_9"/>
<dbReference type="OrthoDB" id="9765462at2"/>
<dbReference type="UniPathway" id="UPA00070">
    <property type="reaction ID" value="UER00117"/>
</dbReference>
<dbReference type="Proteomes" id="UP000001349">
    <property type="component" value="Chromosome"/>
</dbReference>
<dbReference type="GO" id="GO:0005737">
    <property type="term" value="C:cytoplasm"/>
    <property type="evidence" value="ECO:0007669"/>
    <property type="project" value="TreeGrafter"/>
</dbReference>
<dbReference type="GO" id="GO:0004038">
    <property type="term" value="F:allantoinase activity"/>
    <property type="evidence" value="ECO:0007669"/>
    <property type="project" value="TreeGrafter"/>
</dbReference>
<dbReference type="GO" id="GO:0004151">
    <property type="term" value="F:dihydroorotase activity"/>
    <property type="evidence" value="ECO:0007669"/>
    <property type="project" value="UniProtKB-UniRule"/>
</dbReference>
<dbReference type="GO" id="GO:0008270">
    <property type="term" value="F:zinc ion binding"/>
    <property type="evidence" value="ECO:0007669"/>
    <property type="project" value="UniProtKB-UniRule"/>
</dbReference>
<dbReference type="GO" id="GO:0044205">
    <property type="term" value="P:'de novo' UMP biosynthetic process"/>
    <property type="evidence" value="ECO:0007669"/>
    <property type="project" value="UniProtKB-UniRule"/>
</dbReference>
<dbReference type="GO" id="GO:0006145">
    <property type="term" value="P:purine nucleobase catabolic process"/>
    <property type="evidence" value="ECO:0007669"/>
    <property type="project" value="TreeGrafter"/>
</dbReference>
<dbReference type="CDD" id="cd01317">
    <property type="entry name" value="DHOase_IIa"/>
    <property type="match status" value="1"/>
</dbReference>
<dbReference type="Gene3D" id="3.20.20.140">
    <property type="entry name" value="Metal-dependent hydrolases"/>
    <property type="match status" value="1"/>
</dbReference>
<dbReference type="Gene3D" id="2.30.40.10">
    <property type="entry name" value="Urease, subunit C, domain 1"/>
    <property type="match status" value="1"/>
</dbReference>
<dbReference type="HAMAP" id="MF_00220_B">
    <property type="entry name" value="PyrC_classI_B"/>
    <property type="match status" value="1"/>
</dbReference>
<dbReference type="InterPro" id="IPR006680">
    <property type="entry name" value="Amidohydro-rel"/>
</dbReference>
<dbReference type="InterPro" id="IPR004722">
    <property type="entry name" value="DHOase"/>
</dbReference>
<dbReference type="InterPro" id="IPR050138">
    <property type="entry name" value="DHOase/Allantoinase_Hydrolase"/>
</dbReference>
<dbReference type="InterPro" id="IPR002195">
    <property type="entry name" value="Dihydroorotase_CS"/>
</dbReference>
<dbReference type="InterPro" id="IPR011059">
    <property type="entry name" value="Metal-dep_hydrolase_composite"/>
</dbReference>
<dbReference type="InterPro" id="IPR032466">
    <property type="entry name" value="Metal_Hydrolase"/>
</dbReference>
<dbReference type="NCBIfam" id="TIGR00857">
    <property type="entry name" value="pyrC_multi"/>
    <property type="match status" value="1"/>
</dbReference>
<dbReference type="PANTHER" id="PTHR43668">
    <property type="entry name" value="ALLANTOINASE"/>
    <property type="match status" value="1"/>
</dbReference>
<dbReference type="PANTHER" id="PTHR43668:SF2">
    <property type="entry name" value="ALLANTOINASE"/>
    <property type="match status" value="1"/>
</dbReference>
<dbReference type="Pfam" id="PF01979">
    <property type="entry name" value="Amidohydro_1"/>
    <property type="match status" value="1"/>
</dbReference>
<dbReference type="SUPFAM" id="SSF51338">
    <property type="entry name" value="Composite domain of metallo-dependent hydrolases"/>
    <property type="match status" value="1"/>
</dbReference>
<dbReference type="SUPFAM" id="SSF51556">
    <property type="entry name" value="Metallo-dependent hydrolases"/>
    <property type="match status" value="1"/>
</dbReference>
<dbReference type="PROSITE" id="PS00483">
    <property type="entry name" value="DIHYDROOROTASE_2"/>
    <property type="match status" value="1"/>
</dbReference>